<name>RBSD_STRA5</name>
<reference key="1">
    <citation type="journal article" date="2002" name="Proc. Natl. Acad. Sci. U.S.A.">
        <title>Complete genome sequence and comparative genomic analysis of an emerging human pathogen, serotype V Streptococcus agalactiae.</title>
        <authorList>
            <person name="Tettelin H."/>
            <person name="Masignani V."/>
            <person name="Cieslewicz M.J."/>
            <person name="Eisen J.A."/>
            <person name="Peterson S.N."/>
            <person name="Wessels M.R."/>
            <person name="Paulsen I.T."/>
            <person name="Nelson K.E."/>
            <person name="Margarit I."/>
            <person name="Read T.D."/>
            <person name="Madoff L.C."/>
            <person name="Wolf A.M."/>
            <person name="Beanan M.J."/>
            <person name="Brinkac L.M."/>
            <person name="Daugherty S.C."/>
            <person name="DeBoy R.T."/>
            <person name="Durkin A.S."/>
            <person name="Kolonay J.F."/>
            <person name="Madupu R."/>
            <person name="Lewis M.R."/>
            <person name="Radune D."/>
            <person name="Fedorova N.B."/>
            <person name="Scanlan D."/>
            <person name="Khouri H.M."/>
            <person name="Mulligan S."/>
            <person name="Carty H.A."/>
            <person name="Cline R.T."/>
            <person name="Van Aken S.E."/>
            <person name="Gill J."/>
            <person name="Scarselli M."/>
            <person name="Mora M."/>
            <person name="Iacobini E.T."/>
            <person name="Brettoni C."/>
            <person name="Galli G."/>
            <person name="Mariani M."/>
            <person name="Vegni F."/>
            <person name="Maione D."/>
            <person name="Rinaudo D."/>
            <person name="Rappuoli R."/>
            <person name="Telford J.L."/>
            <person name="Kasper D.L."/>
            <person name="Grandi G."/>
            <person name="Fraser C.M."/>
        </authorList>
    </citation>
    <scope>NUCLEOTIDE SEQUENCE [LARGE SCALE GENOMIC DNA]</scope>
    <source>
        <strain>ATCC BAA-611 / 2603 V/R</strain>
    </source>
</reference>
<feature type="chain" id="PRO_0000346281" description="D-ribose pyranase">
    <location>
        <begin position="1"/>
        <end position="132"/>
    </location>
</feature>
<feature type="active site" description="Proton donor" evidence="1">
    <location>
        <position position="20"/>
    </location>
</feature>
<feature type="binding site" evidence="1">
    <location>
        <position position="28"/>
    </location>
    <ligand>
        <name>substrate</name>
    </ligand>
</feature>
<feature type="binding site" evidence="1">
    <location>
        <position position="99"/>
    </location>
    <ligand>
        <name>substrate</name>
    </ligand>
</feature>
<feature type="binding site" evidence="1">
    <location>
        <begin position="121"/>
        <end position="123"/>
    </location>
    <ligand>
        <name>substrate</name>
    </ligand>
</feature>
<keyword id="KW-0119">Carbohydrate metabolism</keyword>
<keyword id="KW-0963">Cytoplasm</keyword>
<keyword id="KW-0413">Isomerase</keyword>
<keyword id="KW-1185">Reference proteome</keyword>
<sequence length="132" mass="14482">MKKTGILNSHLAKLADDLGHTDRVCIGDLGLPVPNGIPKIDLSLTSGIPSFQEVLDIYLENILVEKVILAEEIKEANPDQLSRLLAKLDNSVSIEYVSHNHLKQMTQDVKAVIRTGENTPYSNIILQSGVII</sequence>
<gene>
    <name evidence="1" type="primary">rbsD</name>
    <name type="ordered locus">SAG0117</name>
</gene>
<protein>
    <recommendedName>
        <fullName evidence="1">D-ribose pyranase</fullName>
        <ecNumber evidence="1">5.4.99.62</ecNumber>
    </recommendedName>
</protein>
<dbReference type="EC" id="5.4.99.62" evidence="1"/>
<dbReference type="EMBL" id="AE009948">
    <property type="protein sequence ID" value="AAM99025.1"/>
    <property type="molecule type" value="Genomic_DNA"/>
</dbReference>
<dbReference type="RefSeq" id="NP_687153.1">
    <property type="nucleotide sequence ID" value="NC_004116.1"/>
</dbReference>
<dbReference type="RefSeq" id="WP_000750743.1">
    <property type="nucleotide sequence ID" value="NC_004116.1"/>
</dbReference>
<dbReference type="SMR" id="Q8E280"/>
<dbReference type="STRING" id="208435.SAG0117"/>
<dbReference type="KEGG" id="sag:SAG0117"/>
<dbReference type="PATRIC" id="fig|208435.3.peg.116"/>
<dbReference type="HOGENOM" id="CLU_135498_0_0_9"/>
<dbReference type="OrthoDB" id="9805009at2"/>
<dbReference type="UniPathway" id="UPA00916">
    <property type="reaction ID" value="UER00888"/>
</dbReference>
<dbReference type="Proteomes" id="UP000000821">
    <property type="component" value="Chromosome"/>
</dbReference>
<dbReference type="GO" id="GO:0005829">
    <property type="term" value="C:cytosol"/>
    <property type="evidence" value="ECO:0007669"/>
    <property type="project" value="TreeGrafter"/>
</dbReference>
<dbReference type="GO" id="GO:0062193">
    <property type="term" value="F:D-ribose pyranase activity"/>
    <property type="evidence" value="ECO:0007669"/>
    <property type="project" value="UniProtKB-EC"/>
</dbReference>
<dbReference type="GO" id="GO:0016872">
    <property type="term" value="F:intramolecular lyase activity"/>
    <property type="evidence" value="ECO:0007669"/>
    <property type="project" value="UniProtKB-UniRule"/>
</dbReference>
<dbReference type="GO" id="GO:0048029">
    <property type="term" value="F:monosaccharide binding"/>
    <property type="evidence" value="ECO:0007669"/>
    <property type="project" value="InterPro"/>
</dbReference>
<dbReference type="GO" id="GO:0019303">
    <property type="term" value="P:D-ribose catabolic process"/>
    <property type="evidence" value="ECO:0007669"/>
    <property type="project" value="UniProtKB-UniRule"/>
</dbReference>
<dbReference type="Gene3D" id="3.40.1650.10">
    <property type="entry name" value="RbsD-like domain"/>
    <property type="match status" value="1"/>
</dbReference>
<dbReference type="HAMAP" id="MF_01661">
    <property type="entry name" value="D_rib_pyranase"/>
    <property type="match status" value="1"/>
</dbReference>
<dbReference type="InterPro" id="IPR023064">
    <property type="entry name" value="D-ribose_pyranase"/>
</dbReference>
<dbReference type="InterPro" id="IPR023750">
    <property type="entry name" value="RbsD-like_sf"/>
</dbReference>
<dbReference type="InterPro" id="IPR007721">
    <property type="entry name" value="RbsD_FucU"/>
</dbReference>
<dbReference type="NCBIfam" id="NF008761">
    <property type="entry name" value="PRK11797.1"/>
    <property type="match status" value="1"/>
</dbReference>
<dbReference type="PANTHER" id="PTHR37831">
    <property type="entry name" value="D-RIBOSE PYRANASE"/>
    <property type="match status" value="1"/>
</dbReference>
<dbReference type="PANTHER" id="PTHR37831:SF1">
    <property type="entry name" value="D-RIBOSE PYRANASE"/>
    <property type="match status" value="1"/>
</dbReference>
<dbReference type="Pfam" id="PF05025">
    <property type="entry name" value="RbsD_FucU"/>
    <property type="match status" value="1"/>
</dbReference>
<dbReference type="SUPFAM" id="SSF102546">
    <property type="entry name" value="RbsD-like"/>
    <property type="match status" value="1"/>
</dbReference>
<organism>
    <name type="scientific">Streptococcus agalactiae serotype V (strain ATCC BAA-611 / 2603 V/R)</name>
    <dbReference type="NCBI Taxonomy" id="208435"/>
    <lineage>
        <taxon>Bacteria</taxon>
        <taxon>Bacillati</taxon>
        <taxon>Bacillota</taxon>
        <taxon>Bacilli</taxon>
        <taxon>Lactobacillales</taxon>
        <taxon>Streptococcaceae</taxon>
        <taxon>Streptococcus</taxon>
    </lineage>
</organism>
<evidence type="ECO:0000255" key="1">
    <source>
        <dbReference type="HAMAP-Rule" id="MF_01661"/>
    </source>
</evidence>
<accession>Q8E280</accession>
<proteinExistence type="inferred from homology"/>
<comment type="function">
    <text evidence="1">Catalyzes the interconversion of beta-pyran and beta-furan forms of D-ribose.</text>
</comment>
<comment type="catalytic activity">
    <reaction evidence="1">
        <text>beta-D-ribopyranose = beta-D-ribofuranose</text>
        <dbReference type="Rhea" id="RHEA:25432"/>
        <dbReference type="ChEBI" id="CHEBI:27476"/>
        <dbReference type="ChEBI" id="CHEBI:47002"/>
        <dbReference type="EC" id="5.4.99.62"/>
    </reaction>
</comment>
<comment type="pathway">
    <text evidence="1">Carbohydrate metabolism; D-ribose degradation; D-ribose 5-phosphate from beta-D-ribopyranose: step 1/2.</text>
</comment>
<comment type="subunit">
    <text evidence="1">Homodecamer.</text>
</comment>
<comment type="subcellular location">
    <subcellularLocation>
        <location evidence="1">Cytoplasm</location>
    </subcellularLocation>
</comment>
<comment type="similarity">
    <text evidence="1">Belongs to the RbsD / FucU family. RbsD subfamily.</text>
</comment>